<gene>
    <name evidence="1" type="primary">argC</name>
    <name type="ordered locus">Tfu_2057</name>
</gene>
<organism>
    <name type="scientific">Thermobifida fusca (strain YX)</name>
    <dbReference type="NCBI Taxonomy" id="269800"/>
    <lineage>
        <taxon>Bacteria</taxon>
        <taxon>Bacillati</taxon>
        <taxon>Actinomycetota</taxon>
        <taxon>Actinomycetes</taxon>
        <taxon>Streptosporangiales</taxon>
        <taxon>Nocardiopsidaceae</taxon>
        <taxon>Thermobifida</taxon>
    </lineage>
</organism>
<dbReference type="EC" id="1.2.1.38" evidence="1"/>
<dbReference type="EMBL" id="CP000088">
    <property type="protein sequence ID" value="AAZ56090.1"/>
    <property type="molecule type" value="Genomic_DNA"/>
</dbReference>
<dbReference type="RefSeq" id="WP_011292480.1">
    <property type="nucleotide sequence ID" value="NC_007333.1"/>
</dbReference>
<dbReference type="SMR" id="Q47N79"/>
<dbReference type="STRING" id="269800.Tfu_2057"/>
<dbReference type="KEGG" id="tfu:Tfu_2057"/>
<dbReference type="eggNOG" id="COG0002">
    <property type="taxonomic scope" value="Bacteria"/>
</dbReference>
<dbReference type="HOGENOM" id="CLU_006384_0_0_11"/>
<dbReference type="OrthoDB" id="9801289at2"/>
<dbReference type="UniPathway" id="UPA00068">
    <property type="reaction ID" value="UER00108"/>
</dbReference>
<dbReference type="GO" id="GO:0005737">
    <property type="term" value="C:cytoplasm"/>
    <property type="evidence" value="ECO:0007669"/>
    <property type="project" value="UniProtKB-SubCell"/>
</dbReference>
<dbReference type="GO" id="GO:0003942">
    <property type="term" value="F:N-acetyl-gamma-glutamyl-phosphate reductase activity"/>
    <property type="evidence" value="ECO:0007669"/>
    <property type="project" value="UniProtKB-UniRule"/>
</dbReference>
<dbReference type="GO" id="GO:0051287">
    <property type="term" value="F:NAD binding"/>
    <property type="evidence" value="ECO:0007669"/>
    <property type="project" value="InterPro"/>
</dbReference>
<dbReference type="GO" id="GO:0070401">
    <property type="term" value="F:NADP+ binding"/>
    <property type="evidence" value="ECO:0007669"/>
    <property type="project" value="InterPro"/>
</dbReference>
<dbReference type="GO" id="GO:0006526">
    <property type="term" value="P:L-arginine biosynthetic process"/>
    <property type="evidence" value="ECO:0007669"/>
    <property type="project" value="UniProtKB-UniRule"/>
</dbReference>
<dbReference type="CDD" id="cd24148">
    <property type="entry name" value="AGPR_1_actinobacAGPR_like"/>
    <property type="match status" value="1"/>
</dbReference>
<dbReference type="CDD" id="cd23934">
    <property type="entry name" value="AGPR_1_C"/>
    <property type="match status" value="1"/>
</dbReference>
<dbReference type="FunFam" id="3.30.360.10:FF:000014">
    <property type="entry name" value="N-acetyl-gamma-glutamyl-phosphate reductase"/>
    <property type="match status" value="1"/>
</dbReference>
<dbReference type="Gene3D" id="3.30.360.10">
    <property type="entry name" value="Dihydrodipicolinate Reductase, domain 2"/>
    <property type="match status" value="1"/>
</dbReference>
<dbReference type="Gene3D" id="3.40.50.720">
    <property type="entry name" value="NAD(P)-binding Rossmann-like Domain"/>
    <property type="match status" value="1"/>
</dbReference>
<dbReference type="HAMAP" id="MF_00150">
    <property type="entry name" value="ArgC_type1"/>
    <property type="match status" value="1"/>
</dbReference>
<dbReference type="InterPro" id="IPR023013">
    <property type="entry name" value="AGPR_AS"/>
</dbReference>
<dbReference type="InterPro" id="IPR000706">
    <property type="entry name" value="AGPR_type-1"/>
</dbReference>
<dbReference type="InterPro" id="IPR036291">
    <property type="entry name" value="NAD(P)-bd_dom_sf"/>
</dbReference>
<dbReference type="InterPro" id="IPR050085">
    <property type="entry name" value="NAGSA_dehydrogenase"/>
</dbReference>
<dbReference type="InterPro" id="IPR000534">
    <property type="entry name" value="Semialdehyde_DH_NAD-bd"/>
</dbReference>
<dbReference type="NCBIfam" id="TIGR01850">
    <property type="entry name" value="argC"/>
    <property type="match status" value="1"/>
</dbReference>
<dbReference type="PANTHER" id="PTHR32338:SF10">
    <property type="entry name" value="N-ACETYL-GAMMA-GLUTAMYL-PHOSPHATE REDUCTASE, CHLOROPLASTIC-RELATED"/>
    <property type="match status" value="1"/>
</dbReference>
<dbReference type="PANTHER" id="PTHR32338">
    <property type="entry name" value="N-ACETYL-GAMMA-GLUTAMYL-PHOSPHATE REDUCTASE, CHLOROPLASTIC-RELATED-RELATED"/>
    <property type="match status" value="1"/>
</dbReference>
<dbReference type="Pfam" id="PF01118">
    <property type="entry name" value="Semialdhyde_dh"/>
    <property type="match status" value="1"/>
</dbReference>
<dbReference type="Pfam" id="PF22698">
    <property type="entry name" value="Semialdhyde_dhC_1"/>
    <property type="match status" value="1"/>
</dbReference>
<dbReference type="SMART" id="SM00859">
    <property type="entry name" value="Semialdhyde_dh"/>
    <property type="match status" value="1"/>
</dbReference>
<dbReference type="SUPFAM" id="SSF55347">
    <property type="entry name" value="Glyceraldehyde-3-phosphate dehydrogenase-like, C-terminal domain"/>
    <property type="match status" value="1"/>
</dbReference>
<dbReference type="SUPFAM" id="SSF51735">
    <property type="entry name" value="NAD(P)-binding Rossmann-fold domains"/>
    <property type="match status" value="1"/>
</dbReference>
<dbReference type="PROSITE" id="PS01224">
    <property type="entry name" value="ARGC"/>
    <property type="match status" value="1"/>
</dbReference>
<protein>
    <recommendedName>
        <fullName evidence="1">N-acetyl-gamma-glutamyl-phosphate reductase</fullName>
        <shortName evidence="1">AGPR</shortName>
        <ecNumber evidence="1">1.2.1.38</ecNumber>
    </recommendedName>
    <alternativeName>
        <fullName evidence="1">N-acetyl-glutamate semialdehyde dehydrogenase</fullName>
        <shortName evidence="1">NAGSA dehydrogenase</shortName>
    </alternativeName>
</protein>
<keyword id="KW-0028">Amino-acid biosynthesis</keyword>
<keyword id="KW-0055">Arginine biosynthesis</keyword>
<keyword id="KW-0963">Cytoplasm</keyword>
<keyword id="KW-0521">NADP</keyword>
<keyword id="KW-0560">Oxidoreductase</keyword>
<comment type="function">
    <text evidence="1">Catalyzes the NADPH-dependent reduction of N-acetyl-5-glutamyl phosphate to yield N-acetyl-L-glutamate 5-semialdehyde.</text>
</comment>
<comment type="catalytic activity">
    <reaction evidence="1">
        <text>N-acetyl-L-glutamate 5-semialdehyde + phosphate + NADP(+) = N-acetyl-L-glutamyl 5-phosphate + NADPH + H(+)</text>
        <dbReference type="Rhea" id="RHEA:21588"/>
        <dbReference type="ChEBI" id="CHEBI:15378"/>
        <dbReference type="ChEBI" id="CHEBI:29123"/>
        <dbReference type="ChEBI" id="CHEBI:43474"/>
        <dbReference type="ChEBI" id="CHEBI:57783"/>
        <dbReference type="ChEBI" id="CHEBI:57936"/>
        <dbReference type="ChEBI" id="CHEBI:58349"/>
        <dbReference type="EC" id="1.2.1.38"/>
    </reaction>
</comment>
<comment type="pathway">
    <text evidence="1">Amino-acid biosynthesis; L-arginine biosynthesis; N(2)-acetyl-L-ornithine from L-glutamate: step 3/4.</text>
</comment>
<comment type="subcellular location">
    <subcellularLocation>
        <location evidence="1">Cytoplasm</location>
    </subcellularLocation>
</comment>
<comment type="similarity">
    <text evidence="1">Belongs to the NAGSA dehydrogenase family. Type 1 subfamily.</text>
</comment>
<reference key="1">
    <citation type="journal article" date="2007" name="J. Bacteriol.">
        <title>Genome sequence and analysis of the soil cellulolytic actinomycete Thermobifida fusca YX.</title>
        <authorList>
            <person name="Lykidis A."/>
            <person name="Mavromatis K."/>
            <person name="Ivanova N."/>
            <person name="Anderson I."/>
            <person name="Land M."/>
            <person name="DiBartolo G."/>
            <person name="Martinez M."/>
            <person name="Lapidus A."/>
            <person name="Lucas S."/>
            <person name="Copeland A."/>
            <person name="Richardson P."/>
            <person name="Wilson D.B."/>
            <person name="Kyrpides N."/>
        </authorList>
    </citation>
    <scope>NUCLEOTIDE SEQUENCE [LARGE SCALE GENOMIC DNA]</scope>
    <source>
        <strain>YX</strain>
    </source>
</reference>
<accession>Q47N79</accession>
<proteinExistence type="inferred from homology"/>
<evidence type="ECO:0000255" key="1">
    <source>
        <dbReference type="HAMAP-Rule" id="MF_00150"/>
    </source>
</evidence>
<name>ARGC_THEFY</name>
<feature type="chain" id="PRO_1000011075" description="N-acetyl-gamma-glutamyl-phosphate reductase">
    <location>
        <begin position="1"/>
        <end position="342"/>
    </location>
</feature>
<feature type="active site" evidence="1">
    <location>
        <position position="146"/>
    </location>
</feature>
<sequence length="342" mass="35034">MGYTAAVAGASGYVGGELLRLLLAHPDIEIGALTAGGNAGTRLGEHHPHLTPLADRILTETTPETLAGHDIVFLALPHGHSAALAAQLDADTLIVDCGADFRLADAAAWQKFYGSEHAGTWPYGLPELPGARAALAQTRRIAVPGCYPTCGTLALMPAFAEQLVEPEVVVVAASGTSGAGKAAKPHLIASEVMGSVSVYGVGGAHRHNPEFVQNLSAVAETPVRVSFTPVLVPMPRGILATCSAPLKPAIGLDEVRAAYQRHYDAEPFVHLLPEGQWPTTAMTLGANTAAVQVTVDEAAGRLVAVAAIDNLTKGTAGGAIQSANLALGLPETTGLPMTGVAP</sequence>